<gene>
    <name type="primary">Zfp37</name>
    <name type="synonym">Zfp-37</name>
</gene>
<protein>
    <recommendedName>
        <fullName>Zinc finger protein 37</fullName>
        <shortName>Zfp-37</shortName>
    </recommendedName>
    <alternativeName>
        <fullName>Male germ cell-specific zinc finger protein</fullName>
    </alternativeName>
</protein>
<accession>P17141</accession>
<accession>Q62514</accession>
<accession>Q80YX7</accession>
<dbReference type="EMBL" id="X89264">
    <property type="protein sequence ID" value="CAA61539.1"/>
    <property type="molecule type" value="mRNA"/>
</dbReference>
<dbReference type="EMBL" id="AL683829">
    <property type="status" value="NOT_ANNOTATED_CDS"/>
    <property type="molecule type" value="Genomic_DNA"/>
</dbReference>
<dbReference type="EMBL" id="X64413">
    <property type="protein sequence ID" value="CAA45758.1"/>
    <property type="molecule type" value="mRNA"/>
</dbReference>
<dbReference type="EMBL" id="X52533">
    <property type="protein sequence ID" value="CAA36769.1"/>
    <property type="status" value="ALT_INIT"/>
    <property type="molecule type" value="mRNA"/>
</dbReference>
<dbReference type="CCDS" id="CCDS71400.1"/>
<dbReference type="PIR" id="S10245">
    <property type="entry name" value="S10245"/>
</dbReference>
<dbReference type="PIR" id="S22954">
    <property type="entry name" value="S22954"/>
</dbReference>
<dbReference type="RefSeq" id="NP_001277279.1">
    <property type="nucleotide sequence ID" value="NM_001290350.2"/>
</dbReference>
<dbReference type="SMR" id="P17141"/>
<dbReference type="BioGRID" id="204659">
    <property type="interactions" value="50"/>
</dbReference>
<dbReference type="FunCoup" id="P17141">
    <property type="interactions" value="57"/>
</dbReference>
<dbReference type="STRING" id="10090.ENSMUSP00000070463"/>
<dbReference type="GlyGen" id="P17141">
    <property type="glycosylation" value="1 site, 1 O-linked glycan (1 site)"/>
</dbReference>
<dbReference type="iPTMnet" id="P17141"/>
<dbReference type="PhosphoSitePlus" id="P17141"/>
<dbReference type="SwissPalm" id="P17141"/>
<dbReference type="PaxDb" id="10090-ENSMUSP00000070463"/>
<dbReference type="PeptideAtlas" id="P17141"/>
<dbReference type="ProteomicsDB" id="275147"/>
<dbReference type="Pumba" id="P17141"/>
<dbReference type="Antibodypedia" id="29718">
    <property type="antibodies" value="116 antibodies from 17 providers"/>
</dbReference>
<dbReference type="DNASU" id="22696"/>
<dbReference type="Ensembl" id="ENSMUST00000068822.4">
    <property type="protein sequence ID" value="ENSMUSP00000070463.4"/>
    <property type="gene ID" value="ENSMUSG00000028389.13"/>
</dbReference>
<dbReference type="GeneID" id="22696"/>
<dbReference type="KEGG" id="mmu:22696"/>
<dbReference type="UCSC" id="uc008tbw.2">
    <property type="organism name" value="mouse"/>
</dbReference>
<dbReference type="AGR" id="MGI:99181"/>
<dbReference type="CTD" id="7539"/>
<dbReference type="MGI" id="MGI:99181">
    <property type="gene designation" value="Zfp37"/>
</dbReference>
<dbReference type="VEuPathDB" id="HostDB:ENSMUSG00000028389"/>
<dbReference type="eggNOG" id="KOG1721">
    <property type="taxonomic scope" value="Eukaryota"/>
</dbReference>
<dbReference type="GeneTree" id="ENSGT00940000162711"/>
<dbReference type="HOGENOM" id="CLU_002678_0_12_1"/>
<dbReference type="InParanoid" id="P17141"/>
<dbReference type="OMA" id="QCGKAHS"/>
<dbReference type="OrthoDB" id="6591996at2759"/>
<dbReference type="PhylomeDB" id="P17141"/>
<dbReference type="TreeFam" id="TF350860"/>
<dbReference type="Reactome" id="R-MMU-212436">
    <property type="pathway name" value="Generic Transcription Pathway"/>
</dbReference>
<dbReference type="BioGRID-ORCS" id="22696">
    <property type="hits" value="1 hit in 74 CRISPR screens"/>
</dbReference>
<dbReference type="PRO" id="PR:P17141"/>
<dbReference type="Proteomes" id="UP000000589">
    <property type="component" value="Chromosome 4"/>
</dbReference>
<dbReference type="RNAct" id="P17141">
    <property type="molecule type" value="protein"/>
</dbReference>
<dbReference type="Bgee" id="ENSMUSG00000028389">
    <property type="expression patterns" value="Expressed in seminiferous tubule of testis and 240 other cell types or tissues"/>
</dbReference>
<dbReference type="ExpressionAtlas" id="P17141">
    <property type="expression patterns" value="baseline and differential"/>
</dbReference>
<dbReference type="GO" id="GO:0005634">
    <property type="term" value="C:nucleus"/>
    <property type="evidence" value="ECO:0007669"/>
    <property type="project" value="UniProtKB-SubCell"/>
</dbReference>
<dbReference type="GO" id="GO:0003677">
    <property type="term" value="F:DNA binding"/>
    <property type="evidence" value="ECO:0007669"/>
    <property type="project" value="UniProtKB-KW"/>
</dbReference>
<dbReference type="GO" id="GO:0008270">
    <property type="term" value="F:zinc ion binding"/>
    <property type="evidence" value="ECO:0000304"/>
    <property type="project" value="MGI"/>
</dbReference>
<dbReference type="GO" id="GO:0007281">
    <property type="term" value="P:germ cell development"/>
    <property type="evidence" value="ECO:0000304"/>
    <property type="project" value="MGI"/>
</dbReference>
<dbReference type="GO" id="GO:0006355">
    <property type="term" value="P:regulation of DNA-templated transcription"/>
    <property type="evidence" value="ECO:0007669"/>
    <property type="project" value="InterPro"/>
</dbReference>
<dbReference type="GO" id="GO:0007283">
    <property type="term" value="P:spermatogenesis"/>
    <property type="evidence" value="ECO:0007669"/>
    <property type="project" value="UniProtKB-KW"/>
</dbReference>
<dbReference type="CDD" id="cd07765">
    <property type="entry name" value="KRAB_A-box"/>
    <property type="match status" value="1"/>
</dbReference>
<dbReference type="FunFam" id="3.30.160.60:FF:002295">
    <property type="entry name" value="ZFP37 zinc finger protein"/>
    <property type="match status" value="2"/>
</dbReference>
<dbReference type="FunFam" id="3.30.160.60:FF:000295">
    <property type="entry name" value="zinc finger protein 19"/>
    <property type="match status" value="1"/>
</dbReference>
<dbReference type="FunFam" id="3.30.160.60:FF:000352">
    <property type="entry name" value="zinc finger protein 3 homolog"/>
    <property type="match status" value="1"/>
</dbReference>
<dbReference type="FunFam" id="3.30.160.60:FF:001938">
    <property type="entry name" value="Zinc finger protein 300"/>
    <property type="match status" value="1"/>
</dbReference>
<dbReference type="FunFam" id="3.30.160.60:FF:002343">
    <property type="entry name" value="Zinc finger protein 33A"/>
    <property type="match status" value="1"/>
</dbReference>
<dbReference type="FunFam" id="3.30.160.60:FF:001244">
    <property type="entry name" value="Zinc finger protein 37 homolog"/>
    <property type="match status" value="1"/>
</dbReference>
<dbReference type="FunFam" id="3.30.160.60:FF:000016">
    <property type="entry name" value="zinc finger protein 37 homolog"/>
    <property type="match status" value="1"/>
</dbReference>
<dbReference type="FunFam" id="3.30.160.60:FF:001498">
    <property type="entry name" value="Zinc finger protein 404"/>
    <property type="match status" value="2"/>
</dbReference>
<dbReference type="FunFam" id="3.30.160.60:FF:000200">
    <property type="entry name" value="zinc finger protein 510 isoform X2"/>
    <property type="match status" value="1"/>
</dbReference>
<dbReference type="FunFam" id="3.30.160.60:FF:002254">
    <property type="entry name" value="Zinc finger protein 540"/>
    <property type="match status" value="1"/>
</dbReference>
<dbReference type="Gene3D" id="6.10.140.140">
    <property type="match status" value="1"/>
</dbReference>
<dbReference type="Gene3D" id="3.30.160.60">
    <property type="entry name" value="Classic Zinc Finger"/>
    <property type="match status" value="12"/>
</dbReference>
<dbReference type="InterPro" id="IPR001909">
    <property type="entry name" value="KRAB"/>
</dbReference>
<dbReference type="InterPro" id="IPR036051">
    <property type="entry name" value="KRAB_dom_sf"/>
</dbReference>
<dbReference type="InterPro" id="IPR056436">
    <property type="entry name" value="Znf-C2H2_ZIC1-5/GLI1-3-like"/>
</dbReference>
<dbReference type="InterPro" id="IPR036236">
    <property type="entry name" value="Znf_C2H2_sf"/>
</dbReference>
<dbReference type="InterPro" id="IPR013087">
    <property type="entry name" value="Znf_C2H2_type"/>
</dbReference>
<dbReference type="PANTHER" id="PTHR24394">
    <property type="entry name" value="ZINC FINGER PROTEIN"/>
    <property type="match status" value="1"/>
</dbReference>
<dbReference type="PANTHER" id="PTHR24394:SF48">
    <property type="entry name" value="ZINC FINGER PROTEIN 771"/>
    <property type="match status" value="1"/>
</dbReference>
<dbReference type="Pfam" id="PF01352">
    <property type="entry name" value="KRAB"/>
    <property type="match status" value="1"/>
</dbReference>
<dbReference type="Pfam" id="PF00096">
    <property type="entry name" value="zf-C2H2"/>
    <property type="match status" value="8"/>
</dbReference>
<dbReference type="Pfam" id="PF23561">
    <property type="entry name" value="zf-C2H2_15"/>
    <property type="match status" value="1"/>
</dbReference>
<dbReference type="Pfam" id="PF13465">
    <property type="entry name" value="zf-H2C2_2"/>
    <property type="match status" value="1"/>
</dbReference>
<dbReference type="SMART" id="SM00349">
    <property type="entry name" value="KRAB"/>
    <property type="match status" value="1"/>
</dbReference>
<dbReference type="SMART" id="SM00355">
    <property type="entry name" value="ZnF_C2H2"/>
    <property type="match status" value="12"/>
</dbReference>
<dbReference type="SUPFAM" id="SSF57667">
    <property type="entry name" value="beta-beta-alpha zinc fingers"/>
    <property type="match status" value="7"/>
</dbReference>
<dbReference type="SUPFAM" id="SSF109640">
    <property type="entry name" value="KRAB domain (Kruppel-associated box)"/>
    <property type="match status" value="1"/>
</dbReference>
<dbReference type="PROSITE" id="PS50805">
    <property type="entry name" value="KRAB"/>
    <property type="match status" value="1"/>
</dbReference>
<dbReference type="PROSITE" id="PS00028">
    <property type="entry name" value="ZINC_FINGER_C2H2_1"/>
    <property type="match status" value="11"/>
</dbReference>
<dbReference type="PROSITE" id="PS50157">
    <property type="entry name" value="ZINC_FINGER_C2H2_2"/>
    <property type="match status" value="12"/>
</dbReference>
<reference key="1">
    <citation type="journal article" date="1996" name="Genomics">
        <title>Zfp-37 is a member of the KRAB zinc finger gene family and is expressed in neurons of the developing and adult CNS.</title>
        <authorList>
            <person name="Mazarakis N."/>
            <person name="Michalovich D."/>
            <person name="Karis A."/>
            <person name="Grosveld F."/>
            <person name="Galjart N."/>
        </authorList>
    </citation>
    <scope>NUCLEOTIDE SEQUENCE [MRNA]</scope>
    <source>
        <strain>C57BL/6J</strain>
        <strain>CBA/C57BL</strain>
        <strain>CBA/CaJ</strain>
        <tissue>Brain</tissue>
    </source>
</reference>
<reference key="2">
    <citation type="journal article" date="2009" name="PLoS Biol.">
        <title>Lineage-specific biology revealed by a finished genome assembly of the mouse.</title>
        <authorList>
            <person name="Church D.M."/>
            <person name="Goodstadt L."/>
            <person name="Hillier L.W."/>
            <person name="Zody M.C."/>
            <person name="Goldstein S."/>
            <person name="She X."/>
            <person name="Bult C.J."/>
            <person name="Agarwala R."/>
            <person name="Cherry J.L."/>
            <person name="DiCuccio M."/>
            <person name="Hlavina W."/>
            <person name="Kapustin Y."/>
            <person name="Meric P."/>
            <person name="Maglott D."/>
            <person name="Birtle Z."/>
            <person name="Marques A.C."/>
            <person name="Graves T."/>
            <person name="Zhou S."/>
            <person name="Teague B."/>
            <person name="Potamousis K."/>
            <person name="Churas C."/>
            <person name="Place M."/>
            <person name="Herschleb J."/>
            <person name="Runnheim R."/>
            <person name="Forrest D."/>
            <person name="Amos-Landgraf J."/>
            <person name="Schwartz D.C."/>
            <person name="Cheng Z."/>
            <person name="Lindblad-Toh K."/>
            <person name="Eichler E.E."/>
            <person name="Ponting C.P."/>
        </authorList>
    </citation>
    <scope>NUCLEOTIDE SEQUENCE [LARGE SCALE GENOMIC DNA]</scope>
    <source>
        <strain>C57BL/6J</strain>
    </source>
</reference>
<reference key="3">
    <citation type="journal article" date="1992" name="Nucleic Acids Res.">
        <title>Zfp-37, a new murine zinc finger encoding gene, is expressed in a developmentally regulated pattern in the male germ line.</title>
        <authorList>
            <person name="Burke P.S."/>
            <person name="Wolgemuth D.J."/>
        </authorList>
    </citation>
    <scope>NUCLEOTIDE SEQUENCE [MRNA] OF 42-594</scope>
    <source>
        <tissue>Testis</tissue>
    </source>
</reference>
<reference key="4">
    <citation type="journal article" date="1990" name="Nucleic Acids Res.">
        <title>Cloning and sequencing of a zinc finger cDNA expressed in mouse testis.</title>
        <authorList>
            <person name="Nelki D."/>
            <person name="Dudley K."/>
            <person name="Cunningham P."/>
            <person name="Akhavan M."/>
        </authorList>
    </citation>
    <scope>NUCLEOTIDE SEQUENCE [MRNA] OF 219-594</scope>
    <source>
        <tissue>Testis</tissue>
    </source>
</reference>
<proteinExistence type="evidence at transcript level"/>
<organism>
    <name type="scientific">Mus musculus</name>
    <name type="common">Mouse</name>
    <dbReference type="NCBI Taxonomy" id="10090"/>
    <lineage>
        <taxon>Eukaryota</taxon>
        <taxon>Metazoa</taxon>
        <taxon>Chordata</taxon>
        <taxon>Craniata</taxon>
        <taxon>Vertebrata</taxon>
        <taxon>Euteleostomi</taxon>
        <taxon>Mammalia</taxon>
        <taxon>Eutheria</taxon>
        <taxon>Euarchontoglires</taxon>
        <taxon>Glires</taxon>
        <taxon>Rodentia</taxon>
        <taxon>Myomorpha</taxon>
        <taxon>Muroidea</taxon>
        <taxon>Muridae</taxon>
        <taxon>Murinae</taxon>
        <taxon>Mus</taxon>
        <taxon>Mus</taxon>
    </lineage>
</organism>
<keyword id="KW-0217">Developmental protein</keyword>
<keyword id="KW-0221">Differentiation</keyword>
<keyword id="KW-0238">DNA-binding</keyword>
<keyword id="KW-0479">Metal-binding</keyword>
<keyword id="KW-0539">Nucleus</keyword>
<keyword id="KW-0597">Phosphoprotein</keyword>
<keyword id="KW-1185">Reference proteome</keyword>
<keyword id="KW-0677">Repeat</keyword>
<keyword id="KW-0744">Spermatogenesis</keyword>
<keyword id="KW-0804">Transcription</keyword>
<keyword id="KW-0805">Transcription regulation</keyword>
<keyword id="KW-0862">Zinc</keyword>
<keyword id="KW-0863">Zinc-finger</keyword>
<feature type="chain" id="PRO_0000047294" description="Zinc finger protein 37">
    <location>
        <begin position="1"/>
        <end position="594"/>
    </location>
</feature>
<feature type="domain" description="KRAB" evidence="3">
    <location>
        <begin position="3"/>
        <end position="74"/>
    </location>
</feature>
<feature type="zinc finger region" description="C2H2-type 1" evidence="2">
    <location>
        <begin position="255"/>
        <end position="277"/>
    </location>
</feature>
<feature type="zinc finger region" description="C2H2-type 2" evidence="2">
    <location>
        <begin position="283"/>
        <end position="305"/>
    </location>
</feature>
<feature type="zinc finger region" description="C2H2-type 3" evidence="2">
    <location>
        <begin position="311"/>
        <end position="324"/>
    </location>
</feature>
<feature type="zinc finger region" description="C2H2-type 4" evidence="2">
    <location>
        <begin position="339"/>
        <end position="361"/>
    </location>
</feature>
<feature type="zinc finger region" description="C2H2-type 5" evidence="2">
    <location>
        <begin position="367"/>
        <end position="389"/>
    </location>
</feature>
<feature type="zinc finger region" description="C2H2-type 6" evidence="2">
    <location>
        <begin position="395"/>
        <end position="417"/>
    </location>
</feature>
<feature type="zinc finger region" description="C2H2-type 7" evidence="2">
    <location>
        <begin position="423"/>
        <end position="445"/>
    </location>
</feature>
<feature type="zinc finger region" description="C2H2-type 8" evidence="2">
    <location>
        <begin position="451"/>
        <end position="473"/>
    </location>
</feature>
<feature type="zinc finger region" description="C2H2-type 9" evidence="2">
    <location>
        <begin position="479"/>
        <end position="501"/>
    </location>
</feature>
<feature type="zinc finger region" description="C2H2-type 10" evidence="2">
    <location>
        <begin position="507"/>
        <end position="529"/>
    </location>
</feature>
<feature type="zinc finger region" description="C2H2-type 11" evidence="2">
    <location>
        <begin position="535"/>
        <end position="557"/>
    </location>
</feature>
<feature type="zinc finger region" description="C2H2-type 12" evidence="2">
    <location>
        <begin position="563"/>
        <end position="585"/>
    </location>
</feature>
<feature type="region of interest" description="Disordered" evidence="4">
    <location>
        <begin position="1"/>
        <end position="253"/>
    </location>
</feature>
<feature type="compositionally biased region" description="Basic and acidic residues" evidence="4">
    <location>
        <begin position="10"/>
        <end position="33"/>
    </location>
</feature>
<feature type="compositionally biased region" description="Polar residues" evidence="4">
    <location>
        <begin position="34"/>
        <end position="46"/>
    </location>
</feature>
<feature type="compositionally biased region" description="Basic and acidic residues" evidence="4">
    <location>
        <begin position="89"/>
        <end position="111"/>
    </location>
</feature>
<feature type="compositionally biased region" description="Polar residues" evidence="4">
    <location>
        <begin position="145"/>
        <end position="158"/>
    </location>
</feature>
<feature type="compositionally biased region" description="Basic and acidic residues" evidence="4">
    <location>
        <begin position="159"/>
        <end position="172"/>
    </location>
</feature>
<feature type="compositionally biased region" description="Basic and acidic residues" evidence="4">
    <location>
        <begin position="181"/>
        <end position="234"/>
    </location>
</feature>
<feature type="modified residue" description="Phosphothreonine" evidence="1">
    <location>
        <position position="3"/>
    </location>
</feature>
<feature type="modified residue" description="Phosphoserine" evidence="1">
    <location>
        <position position="9"/>
    </location>
</feature>
<feature type="sequence conflict" description="In Ref. 3; CAA45758." evidence="5" ref="3">
    <original>S</original>
    <variation>T</variation>
    <location>
        <position position="101"/>
    </location>
</feature>
<feature type="sequence conflict" description="In Ref. 1; CAA61539 and 3; CAA45758." evidence="5" ref="1 3">
    <original>D</original>
    <variation>E</variation>
    <location>
        <position position="169"/>
    </location>
</feature>
<feature type="sequence conflict" description="In Ref. 1; CAA61539 and 4; CAA36769." evidence="5" ref="1 4">
    <original>V</original>
    <variation>L</variation>
    <location>
        <position position="300"/>
    </location>
</feature>
<feature type="sequence conflict" description="In Ref. 3; CAA45758." evidence="5" ref="3">
    <original>T</original>
    <variation>P</variation>
    <location>
        <position position="528"/>
    </location>
</feature>
<feature type="sequence conflict" description="In Ref. 3; CAA45758." evidence="5" ref="3">
    <original>K</original>
    <variation>N</variation>
    <location>
        <position position="533"/>
    </location>
</feature>
<feature type="sequence conflict" description="In Ref. 4; CAA36769." evidence="5" ref="4">
    <original>F</original>
    <variation>V</variation>
    <location>
        <position position="572"/>
    </location>
</feature>
<comment type="function">
    <text>May have a role in regulating spermiogenesis.</text>
</comment>
<comment type="subcellular location">
    <subcellularLocation>
        <location evidence="5">Nucleus</location>
    </subcellularLocation>
</comment>
<comment type="tissue specificity">
    <text>Expressed in testis and brain.</text>
</comment>
<comment type="similarity">
    <text evidence="5">Belongs to the krueppel C2H2-type zinc-finger protein family.</text>
</comment>
<comment type="sequence caution" evidence="5">
    <conflict type="erroneous initiation">
        <sequence resource="EMBL-CDS" id="CAA36769"/>
    </conflict>
    <text>Truncated N-terminus.</text>
</comment>
<sequence>MATSEPAESDAVRAKEWEQLEPVQRDVYKDTKLENCSNPASMGNQDPKQDIVSVLEEEEPSSGKGKKASPSSLKKIARPKTAGTSAKLQQDDEHREEKQKSQSKLTKEVTLRKKSSNSKKSSEYGLLENKSLHSKHTPSEKKLLKSSSRGKNSNQNSDSLKKKPDTANDHRKSLSHSASDVNKDEIPTRKKCDKLPNNKLSDKGDKNQTSKKCEKVCRHSASHTKEDKIQTGEKRKSHCRTPSKPEKAPGSGKPYECNHCGKVLSHKQGLLDHQRTHTGEKPYECNECGIAFSQKSHLVVHQRTHTGEKPYECEQCGKAHGHKHALTDHLRIHTGEKPYKCNECGKTFRHSSNLMQHLRSHTGEKPYECKECGKSFRYNSSLTEHVRTHTGEIPYECNECGKAFKYGSSLTKHMRIHTGEKPFECNECGKTFSKKSHLVIHQRTHTKEKPYKCDECGKAFGHSSSLTYHMRTHTGDCPFECNQCGKAFKQIEGLTQHQRVHTGEKPYECVECGKAFSQKSHLIVHQRTHTGEKPFECYECGKAFNAKSQLVIHQRSHTGEKPYECIECGKAFKQNASLTKHMKIHSEEQSEEED</sequence>
<name>ZFP37_MOUSE</name>
<evidence type="ECO:0000250" key="1">
    <source>
        <dbReference type="UniProtKB" id="O88553"/>
    </source>
</evidence>
<evidence type="ECO:0000255" key="2">
    <source>
        <dbReference type="PROSITE-ProRule" id="PRU00042"/>
    </source>
</evidence>
<evidence type="ECO:0000255" key="3">
    <source>
        <dbReference type="PROSITE-ProRule" id="PRU00119"/>
    </source>
</evidence>
<evidence type="ECO:0000256" key="4">
    <source>
        <dbReference type="SAM" id="MobiDB-lite"/>
    </source>
</evidence>
<evidence type="ECO:0000305" key="5"/>